<dbReference type="EC" id="3.1.26.-"/>
<dbReference type="EMBL" id="U38804">
    <property type="protein sequence ID" value="AAC08097.1"/>
    <property type="molecule type" value="Genomic_DNA"/>
</dbReference>
<dbReference type="PIR" id="S73132">
    <property type="entry name" value="S73132"/>
</dbReference>
<dbReference type="RefSeq" id="NP_053821.1">
    <property type="nucleotide sequence ID" value="NC_000925.1"/>
</dbReference>
<dbReference type="SMR" id="P51211"/>
<dbReference type="GeneID" id="809835"/>
<dbReference type="GO" id="GO:0009570">
    <property type="term" value="C:chloroplast stroma"/>
    <property type="evidence" value="ECO:0007669"/>
    <property type="project" value="UniProtKB-SubCell"/>
</dbReference>
<dbReference type="GO" id="GO:0004519">
    <property type="term" value="F:endonuclease activity"/>
    <property type="evidence" value="ECO:0007669"/>
    <property type="project" value="UniProtKB-KW"/>
</dbReference>
<dbReference type="GO" id="GO:0046872">
    <property type="term" value="F:metal ion binding"/>
    <property type="evidence" value="ECO:0007669"/>
    <property type="project" value="UniProtKB-KW"/>
</dbReference>
<dbReference type="GO" id="GO:0003723">
    <property type="term" value="F:RNA binding"/>
    <property type="evidence" value="ECO:0007669"/>
    <property type="project" value="UniProtKB-KW"/>
</dbReference>
<dbReference type="GO" id="GO:0004540">
    <property type="term" value="F:RNA nuclease activity"/>
    <property type="evidence" value="ECO:0007669"/>
    <property type="project" value="InterPro"/>
</dbReference>
<dbReference type="GO" id="GO:0006397">
    <property type="term" value="P:mRNA processing"/>
    <property type="evidence" value="ECO:0007669"/>
    <property type="project" value="UniProtKB-KW"/>
</dbReference>
<dbReference type="GO" id="GO:0006364">
    <property type="term" value="P:rRNA processing"/>
    <property type="evidence" value="ECO:0007669"/>
    <property type="project" value="TreeGrafter"/>
</dbReference>
<dbReference type="CDD" id="cd04453">
    <property type="entry name" value="S1_RNase_E"/>
    <property type="match status" value="1"/>
</dbReference>
<dbReference type="Gene3D" id="2.40.50.140">
    <property type="entry name" value="Nucleic acid-binding proteins"/>
    <property type="match status" value="1"/>
</dbReference>
<dbReference type="InterPro" id="IPR012340">
    <property type="entry name" value="NA-bd_OB-fold"/>
</dbReference>
<dbReference type="InterPro" id="IPR019307">
    <property type="entry name" value="RNA-bd_AU-1/RNase_E/G"/>
</dbReference>
<dbReference type="InterPro" id="IPR004659">
    <property type="entry name" value="RNase_E/G"/>
</dbReference>
<dbReference type="InterPro" id="IPR003029">
    <property type="entry name" value="S1_domain"/>
</dbReference>
<dbReference type="NCBIfam" id="TIGR00757">
    <property type="entry name" value="RNaseEG"/>
    <property type="match status" value="1"/>
</dbReference>
<dbReference type="PANTHER" id="PTHR30001">
    <property type="entry name" value="RIBONUCLEASE"/>
    <property type="match status" value="1"/>
</dbReference>
<dbReference type="PANTHER" id="PTHR30001:SF0">
    <property type="entry name" value="RIBONUCLEASE G"/>
    <property type="match status" value="1"/>
</dbReference>
<dbReference type="Pfam" id="PF10150">
    <property type="entry name" value="RNase_E_G"/>
    <property type="match status" value="1"/>
</dbReference>
<dbReference type="SMART" id="SM00316">
    <property type="entry name" value="S1"/>
    <property type="match status" value="1"/>
</dbReference>
<dbReference type="SUPFAM" id="SSF50249">
    <property type="entry name" value="Nucleic acid-binding proteins"/>
    <property type="match status" value="1"/>
</dbReference>
<dbReference type="PROSITE" id="PS50126">
    <property type="entry name" value="S1"/>
    <property type="match status" value="1"/>
</dbReference>
<name>RNE_PORPU</name>
<comment type="function">
    <text evidence="1">Involved in intercistronic processing of primary transcripts from chloroplast operons. The endonucleolytic activity of the enzyme depends on the number of phosphates at the 5' end, is inhibited by structured RNA, and preferentially cleaves A/U-rich sequences.</text>
</comment>
<comment type="cofactor">
    <cofactor evidence="2">
        <name>Mg(2+)</name>
        <dbReference type="ChEBI" id="CHEBI:18420"/>
    </cofactor>
    <text evidence="2">Binds 1 Mg(2+) ion per subunit.</text>
</comment>
<comment type="subcellular location">
    <subcellularLocation>
        <location evidence="1">Plastid</location>
        <location evidence="1">Chloroplast stroma</location>
    </subcellularLocation>
</comment>
<comment type="similarity">
    <text evidence="4">Belongs to the RNase E/G family.</text>
</comment>
<sequence length="511" mass="58795">MTNTIVISCLHNIAAILYCGQIQKLVVANAHYQVSDIYLGTVDKIFSGINAAFVDLGKNEYSGFIHISDTGPLKKKYYINNITNILTIRQKILVQIIKEPTLNKGPRLTANITLSGRYIVLMPFSQAICISRKIYDEDERHYLKALAILIKPPTMGLLFRPSAIGIDEEIILSELTNLKEQWYFIQKSAINNCAPVLLYKDEDIVKKVIRDFYDNNTKNIVIDSNLGLKQLNYYINTWQCNFSSTIPSLQLYSSNKCILDTFRINQAISRALIPKVDLILGGYMFIETLEAFTIIDVNSGSFNNSTSARETVLKTNCSAATEIAYQLKIRNIAGVIIIDFIDMESQRDQLQLLEHFDKELSLDDAKPQIVQLSELGLVELTRRRKGKSLYELVSNDSNYFHFFIQLEQLDSIKPSSYKSKRLSSSVKSWLFSEIDMINRVFFKKSNLYRLSNFYYARNLYIIYSDFTVNKNIQLAARYKLMYSLQNIQILPSTWYFNFLDIHTNNITNYLS</sequence>
<accession>P51211</accession>
<protein>
    <recommendedName>
        <fullName>Ribonuclease E/G-like protein</fullName>
        <shortName>RNase E/G-like protein</shortName>
        <ecNumber>3.1.26.-</ecNumber>
    </recommendedName>
</protein>
<keyword id="KW-0150">Chloroplast</keyword>
<keyword id="KW-0255">Endonuclease</keyword>
<keyword id="KW-0378">Hydrolase</keyword>
<keyword id="KW-0460">Magnesium</keyword>
<keyword id="KW-0479">Metal-binding</keyword>
<keyword id="KW-0507">mRNA processing</keyword>
<keyword id="KW-0540">Nuclease</keyword>
<keyword id="KW-0934">Plastid</keyword>
<keyword id="KW-0694">RNA-binding</keyword>
<gene>
    <name type="primary">rne</name>
</gene>
<organism>
    <name type="scientific">Porphyra purpurea</name>
    <name type="common">Red seaweed</name>
    <name type="synonym">Ulva purpurea</name>
    <dbReference type="NCBI Taxonomy" id="2787"/>
    <lineage>
        <taxon>Eukaryota</taxon>
        <taxon>Rhodophyta</taxon>
        <taxon>Bangiophyceae</taxon>
        <taxon>Bangiales</taxon>
        <taxon>Bangiaceae</taxon>
        <taxon>Porphyra</taxon>
    </lineage>
</organism>
<proteinExistence type="inferred from homology"/>
<reference key="1">
    <citation type="journal article" date="1995" name="Plant Mol. Biol. Rep.">
        <title>Complete nucleotide sequence of the Porphyra purpurea chloroplast genome.</title>
        <authorList>
            <person name="Reith M.E."/>
            <person name="Munholland J."/>
        </authorList>
    </citation>
    <scope>NUCLEOTIDE SEQUENCE [LARGE SCALE GENOMIC DNA]</scope>
    <source>
        <strain>Avonport</strain>
    </source>
</reference>
<evidence type="ECO:0000250" key="1">
    <source>
        <dbReference type="UniProtKB" id="F4IV66"/>
    </source>
</evidence>
<evidence type="ECO:0000250" key="2">
    <source>
        <dbReference type="UniProtKB" id="P21513"/>
    </source>
</evidence>
<evidence type="ECO:0000255" key="3">
    <source>
        <dbReference type="PROSITE-ProRule" id="PRU00180"/>
    </source>
</evidence>
<evidence type="ECO:0000305" key="4"/>
<feature type="chain" id="PRO_0000097377" description="Ribonuclease E/G-like protein">
    <location>
        <begin position="1"/>
        <end position="511"/>
    </location>
</feature>
<feature type="domain" description="S1 motif" evidence="3">
    <location>
        <begin position="35"/>
        <end position="117"/>
    </location>
</feature>
<feature type="binding site" evidence="2">
    <location>
        <position position="296"/>
    </location>
    <ligand>
        <name>Mg(2+)</name>
        <dbReference type="ChEBI" id="CHEBI:18420"/>
        <note>catalytic</note>
    </ligand>
</feature>
<feature type="binding site" evidence="2">
    <location>
        <position position="339"/>
    </location>
    <ligand>
        <name>Mg(2+)</name>
        <dbReference type="ChEBI" id="CHEBI:18420"/>
        <note>catalytic</note>
    </ligand>
</feature>
<geneLocation type="chloroplast"/>